<name>KA104_CENTE</name>
<sequence>AVCVYRTCDKDCKRRGYRSGKCINNACKCYPYA</sequence>
<comment type="function">
    <text evidence="2">Blocks human voltage-gated potassium channel Kv1.2/KCNA2 (IC(50)=3.6 nM) and Kv1.3/KCNA3 (IC(50)=72 nM).</text>
</comment>
<comment type="subcellular location">
    <subcellularLocation>
        <location evidence="2">Secreted</location>
    </subcellularLocation>
</comment>
<comment type="tissue specificity">
    <text evidence="5">Expressed by the venom gland.</text>
</comment>
<comment type="domain">
    <text evidence="4">Has the structural arrangement of an alpha-helix connected to antiparallel beta-sheets by disulfide bonds (CS-alpha/beta).</text>
</comment>
<comment type="mass spectrometry"/>
<comment type="miscellaneous">
    <text evidence="2">Negative results: does not block voltage-gated potassium channel Kv1.1/KCNA1, intermediate conductance calcium-activated potassium channel KCa3.1/KCNN4 or the Shaker IR (with inactivation domain removed).</text>
</comment>
<comment type="similarity">
    <text evidence="4">Belongs to the short scorpion toxin superfamily. Potassium channel inhibitor family. Alpha-KTx 10 subfamily.</text>
</comment>
<organism>
    <name type="scientific">Centruroides tecomanus</name>
    <name type="common">Scorpion</name>
    <name type="synonym">Centruroides limpidus tecomanus</name>
    <dbReference type="NCBI Taxonomy" id="1028682"/>
    <lineage>
        <taxon>Eukaryota</taxon>
        <taxon>Metazoa</taxon>
        <taxon>Ecdysozoa</taxon>
        <taxon>Arthropoda</taxon>
        <taxon>Chelicerata</taxon>
        <taxon>Arachnida</taxon>
        <taxon>Scorpiones</taxon>
        <taxon>Buthida</taxon>
        <taxon>Buthoidea</taxon>
        <taxon>Buthidae</taxon>
        <taxon>Centruroides</taxon>
    </lineage>
</organism>
<evidence type="ECO:0000250" key="1">
    <source>
        <dbReference type="UniProtKB" id="O46028"/>
    </source>
</evidence>
<evidence type="ECO:0000269" key="2">
    <source>
    </source>
</evidence>
<evidence type="ECO:0000303" key="3">
    <source>
    </source>
</evidence>
<evidence type="ECO:0000305" key="4"/>
<evidence type="ECO:0000305" key="5">
    <source>
    </source>
</evidence>
<reference key="1">
    <citation type="journal article" date="2016" name="Toxicon">
        <title>Isolation, chemical and functional characterization of several new K(+)-channel blocking peptides from the venom of the scorpion Centruroides tecomanus.</title>
        <authorList>
            <person name="Olamendi-Portugal T."/>
            <person name="Bartok A."/>
            <person name="Zamudio-Zuniga F."/>
            <person name="Balajthy A."/>
            <person name="Becerril B."/>
            <person name="Panyi G."/>
            <person name="Possani L.D."/>
        </authorList>
    </citation>
    <scope>PROTEIN SEQUENCE</scope>
    <scope>FUNCTION</scope>
    <scope>SUBCELLULAR LOCATION</scope>
    <scope>MASS SPECTROMETRY</scope>
    <source>
        <tissue>Venom</tissue>
    </source>
</reference>
<accession>C0HJW2</accession>
<keyword id="KW-0903">Direct protein sequencing</keyword>
<keyword id="KW-1015">Disulfide bond</keyword>
<keyword id="KW-0872">Ion channel impairing toxin</keyword>
<keyword id="KW-0528">Neurotoxin</keyword>
<keyword id="KW-0632">Potassium channel impairing toxin</keyword>
<keyword id="KW-0964">Secreted</keyword>
<keyword id="KW-0800">Toxin</keyword>
<keyword id="KW-1220">Voltage-gated potassium channel impairing toxin</keyword>
<feature type="peptide" id="PRO_0000436539" description="Potassium channel toxin alpha-KTx 10.4" evidence="2">
    <location>
        <begin position="1"/>
        <end position="33"/>
    </location>
</feature>
<feature type="site" description="Basic residue of the functional dyad" evidence="1">
    <location>
        <position position="21"/>
    </location>
</feature>
<feature type="site" description="Aromatic residue of the functional dyad" evidence="1">
    <location>
        <position position="30"/>
    </location>
</feature>
<feature type="disulfide bond" evidence="1">
    <location>
        <begin position="3"/>
        <end position="22"/>
    </location>
</feature>
<feature type="disulfide bond" evidence="1">
    <location>
        <begin position="8"/>
        <end position="27"/>
    </location>
</feature>
<feature type="disulfide bond" evidence="1">
    <location>
        <begin position="12"/>
        <end position="29"/>
    </location>
</feature>
<protein>
    <recommendedName>
        <fullName evidence="3">Potassium channel toxin alpha-KTx 10.4</fullName>
    </recommendedName>
    <alternativeName>
        <fullName evidence="3">Toxin II.10.4</fullName>
    </alternativeName>
</protein>
<proteinExistence type="evidence at protein level"/>
<dbReference type="SMR" id="C0HJW2"/>
<dbReference type="GO" id="GO:0005576">
    <property type="term" value="C:extracellular region"/>
    <property type="evidence" value="ECO:0007669"/>
    <property type="project" value="UniProtKB-SubCell"/>
</dbReference>
<dbReference type="GO" id="GO:0008200">
    <property type="term" value="F:ion channel inhibitor activity"/>
    <property type="evidence" value="ECO:0007669"/>
    <property type="project" value="InterPro"/>
</dbReference>
<dbReference type="GO" id="GO:0015459">
    <property type="term" value="F:potassium channel regulator activity"/>
    <property type="evidence" value="ECO:0007669"/>
    <property type="project" value="UniProtKB-KW"/>
</dbReference>
<dbReference type="GO" id="GO:0090729">
    <property type="term" value="F:toxin activity"/>
    <property type="evidence" value="ECO:0007669"/>
    <property type="project" value="UniProtKB-KW"/>
</dbReference>
<dbReference type="Gene3D" id="3.30.30.10">
    <property type="entry name" value="Knottin, scorpion toxin-like"/>
    <property type="match status" value="1"/>
</dbReference>
<dbReference type="InterPro" id="IPR036574">
    <property type="entry name" value="Scorpion_toxin-like_sf"/>
</dbReference>
<dbReference type="InterPro" id="IPR001947">
    <property type="entry name" value="Scorpion_toxinS_K_inh"/>
</dbReference>
<dbReference type="Pfam" id="PF00451">
    <property type="entry name" value="Toxin_2"/>
    <property type="match status" value="1"/>
</dbReference>
<dbReference type="SUPFAM" id="SSF57095">
    <property type="entry name" value="Scorpion toxin-like"/>
    <property type="match status" value="1"/>
</dbReference>
<dbReference type="PROSITE" id="PS01138">
    <property type="entry name" value="SCORP_SHORT_TOXIN"/>
    <property type="match status" value="1"/>
</dbReference>